<accession>B2U9Q0</accession>
<comment type="function">
    <text evidence="1">Component of the acetyl coenzyme A carboxylase (ACC) complex. First, biotin carboxylase catalyzes the carboxylation of biotin on its carrier protein (BCCP) and then the CO(2) group is transferred by the carboxyltransferase to acetyl-CoA to form malonyl-CoA.</text>
</comment>
<comment type="catalytic activity">
    <reaction evidence="1">
        <text>N(6)-carboxybiotinyl-L-lysyl-[protein] + acetyl-CoA = N(6)-biotinyl-L-lysyl-[protein] + malonyl-CoA</text>
        <dbReference type="Rhea" id="RHEA:54728"/>
        <dbReference type="Rhea" id="RHEA-COMP:10505"/>
        <dbReference type="Rhea" id="RHEA-COMP:10506"/>
        <dbReference type="ChEBI" id="CHEBI:57288"/>
        <dbReference type="ChEBI" id="CHEBI:57384"/>
        <dbReference type="ChEBI" id="CHEBI:83144"/>
        <dbReference type="ChEBI" id="CHEBI:83145"/>
        <dbReference type="EC" id="2.1.3.15"/>
    </reaction>
</comment>
<comment type="pathway">
    <text evidence="1">Lipid metabolism; malonyl-CoA biosynthesis; malonyl-CoA from acetyl-CoA: step 1/1.</text>
</comment>
<comment type="subunit">
    <text evidence="1">Acetyl-CoA carboxylase is a heterohexamer composed of biotin carboxyl carrier protein (AccB), biotin carboxylase (AccC) and two subunits each of ACCase subunit alpha (AccA) and ACCase subunit beta (AccD).</text>
</comment>
<comment type="subcellular location">
    <subcellularLocation>
        <location evidence="1">Cytoplasm</location>
    </subcellularLocation>
</comment>
<comment type="similarity">
    <text evidence="1">Belongs to the AccA family.</text>
</comment>
<proteinExistence type="inferred from homology"/>
<organism>
    <name type="scientific">Ralstonia pickettii (strain 12J)</name>
    <dbReference type="NCBI Taxonomy" id="402626"/>
    <lineage>
        <taxon>Bacteria</taxon>
        <taxon>Pseudomonadati</taxon>
        <taxon>Pseudomonadota</taxon>
        <taxon>Betaproteobacteria</taxon>
        <taxon>Burkholderiales</taxon>
        <taxon>Burkholderiaceae</taxon>
        <taxon>Ralstonia</taxon>
    </lineage>
</organism>
<gene>
    <name evidence="1" type="primary">accA</name>
    <name type="ordered locus">Rpic_1010</name>
</gene>
<sequence>MKTTFLEFEQPIAELEAKIEELRFVQDDSAVDISEEISRLASKSQQLTKDLYANLTPWQVAQIARHPQRPYTLDYVREIFTDFHELHGDRTFADDLSIVGGLARFNGQACMVIGHQKGRDTKERALRNFGMSKPEGYRKAKRLMELADKFGLPIFTFVDTPGAFPGIDAEERGQSEAIGHNLFVMAGLKVPLIATIIGEGGSGGALAIAMGDSVIMLQFATYAVISPEGCASILWKTAEKAPEAAEALGLTAHRLKALGLIDKIVNEPLGGAHRDPKSMATMLKRALAESLRQFQGMKTSELQARRHERLMAYGKFKETEGR</sequence>
<reference key="1">
    <citation type="submission" date="2008-05" db="EMBL/GenBank/DDBJ databases">
        <title>Complete sequence of chromosome 1 of Ralstonia pickettii 12J.</title>
        <authorList>
            <person name="Lucas S."/>
            <person name="Copeland A."/>
            <person name="Lapidus A."/>
            <person name="Glavina del Rio T."/>
            <person name="Dalin E."/>
            <person name="Tice H."/>
            <person name="Bruce D."/>
            <person name="Goodwin L."/>
            <person name="Pitluck S."/>
            <person name="Meincke L."/>
            <person name="Brettin T."/>
            <person name="Detter J.C."/>
            <person name="Han C."/>
            <person name="Kuske C.R."/>
            <person name="Schmutz J."/>
            <person name="Larimer F."/>
            <person name="Land M."/>
            <person name="Hauser L."/>
            <person name="Kyrpides N."/>
            <person name="Mikhailova N."/>
            <person name="Marsh T."/>
            <person name="Richardson P."/>
        </authorList>
    </citation>
    <scope>NUCLEOTIDE SEQUENCE [LARGE SCALE GENOMIC DNA]</scope>
    <source>
        <strain>12J</strain>
    </source>
</reference>
<protein>
    <recommendedName>
        <fullName evidence="1">Acetyl-coenzyme A carboxylase carboxyl transferase subunit alpha</fullName>
        <shortName evidence="1">ACCase subunit alpha</shortName>
        <shortName evidence="1">Acetyl-CoA carboxylase carboxyltransferase subunit alpha</shortName>
        <ecNumber evidence="1">2.1.3.15</ecNumber>
    </recommendedName>
</protein>
<evidence type="ECO:0000255" key="1">
    <source>
        <dbReference type="HAMAP-Rule" id="MF_00823"/>
    </source>
</evidence>
<evidence type="ECO:0000255" key="2">
    <source>
        <dbReference type="PROSITE-ProRule" id="PRU01137"/>
    </source>
</evidence>
<dbReference type="EC" id="2.1.3.15" evidence="1"/>
<dbReference type="EMBL" id="CP001068">
    <property type="protein sequence ID" value="ACD26158.1"/>
    <property type="molecule type" value="Genomic_DNA"/>
</dbReference>
<dbReference type="SMR" id="B2U9Q0"/>
<dbReference type="STRING" id="402626.Rpic_1010"/>
<dbReference type="KEGG" id="rpi:Rpic_1010"/>
<dbReference type="eggNOG" id="COG0825">
    <property type="taxonomic scope" value="Bacteria"/>
</dbReference>
<dbReference type="HOGENOM" id="CLU_015486_0_2_4"/>
<dbReference type="UniPathway" id="UPA00655">
    <property type="reaction ID" value="UER00711"/>
</dbReference>
<dbReference type="GO" id="GO:0009317">
    <property type="term" value="C:acetyl-CoA carboxylase complex"/>
    <property type="evidence" value="ECO:0007669"/>
    <property type="project" value="InterPro"/>
</dbReference>
<dbReference type="GO" id="GO:0003989">
    <property type="term" value="F:acetyl-CoA carboxylase activity"/>
    <property type="evidence" value="ECO:0007669"/>
    <property type="project" value="InterPro"/>
</dbReference>
<dbReference type="GO" id="GO:0005524">
    <property type="term" value="F:ATP binding"/>
    <property type="evidence" value="ECO:0007669"/>
    <property type="project" value="UniProtKB-KW"/>
</dbReference>
<dbReference type="GO" id="GO:0016743">
    <property type="term" value="F:carboxyl- or carbamoyltransferase activity"/>
    <property type="evidence" value="ECO:0007669"/>
    <property type="project" value="UniProtKB-UniRule"/>
</dbReference>
<dbReference type="GO" id="GO:0006633">
    <property type="term" value="P:fatty acid biosynthetic process"/>
    <property type="evidence" value="ECO:0007669"/>
    <property type="project" value="UniProtKB-KW"/>
</dbReference>
<dbReference type="GO" id="GO:2001295">
    <property type="term" value="P:malonyl-CoA biosynthetic process"/>
    <property type="evidence" value="ECO:0007669"/>
    <property type="project" value="UniProtKB-UniRule"/>
</dbReference>
<dbReference type="Gene3D" id="3.90.226.10">
    <property type="entry name" value="2-enoyl-CoA Hydratase, Chain A, domain 1"/>
    <property type="match status" value="1"/>
</dbReference>
<dbReference type="HAMAP" id="MF_00823">
    <property type="entry name" value="AcetylCoA_CT_alpha"/>
    <property type="match status" value="1"/>
</dbReference>
<dbReference type="InterPro" id="IPR001095">
    <property type="entry name" value="Acetyl_CoA_COase_a_su"/>
</dbReference>
<dbReference type="InterPro" id="IPR029045">
    <property type="entry name" value="ClpP/crotonase-like_dom_sf"/>
</dbReference>
<dbReference type="InterPro" id="IPR011763">
    <property type="entry name" value="COA_CT_C"/>
</dbReference>
<dbReference type="NCBIfam" id="TIGR00513">
    <property type="entry name" value="accA"/>
    <property type="match status" value="1"/>
</dbReference>
<dbReference type="NCBIfam" id="NF041504">
    <property type="entry name" value="AccA_sub"/>
    <property type="match status" value="1"/>
</dbReference>
<dbReference type="NCBIfam" id="NF004344">
    <property type="entry name" value="PRK05724.1"/>
    <property type="match status" value="1"/>
</dbReference>
<dbReference type="PANTHER" id="PTHR42853">
    <property type="entry name" value="ACETYL-COENZYME A CARBOXYLASE CARBOXYL TRANSFERASE SUBUNIT ALPHA"/>
    <property type="match status" value="1"/>
</dbReference>
<dbReference type="PANTHER" id="PTHR42853:SF3">
    <property type="entry name" value="ACETYL-COENZYME A CARBOXYLASE CARBOXYL TRANSFERASE SUBUNIT ALPHA, CHLOROPLASTIC"/>
    <property type="match status" value="1"/>
</dbReference>
<dbReference type="Pfam" id="PF03255">
    <property type="entry name" value="ACCA"/>
    <property type="match status" value="1"/>
</dbReference>
<dbReference type="PRINTS" id="PR01069">
    <property type="entry name" value="ACCCTRFRASEA"/>
</dbReference>
<dbReference type="SUPFAM" id="SSF52096">
    <property type="entry name" value="ClpP/crotonase"/>
    <property type="match status" value="1"/>
</dbReference>
<dbReference type="PROSITE" id="PS50989">
    <property type="entry name" value="COA_CT_CTER"/>
    <property type="match status" value="1"/>
</dbReference>
<feature type="chain" id="PRO_1000134509" description="Acetyl-coenzyme A carboxylase carboxyl transferase subunit alpha">
    <location>
        <begin position="1"/>
        <end position="322"/>
    </location>
</feature>
<feature type="domain" description="CoA carboxyltransferase C-terminal" evidence="2">
    <location>
        <begin position="39"/>
        <end position="293"/>
    </location>
</feature>
<name>ACCA_RALPJ</name>
<keyword id="KW-0067">ATP-binding</keyword>
<keyword id="KW-0963">Cytoplasm</keyword>
<keyword id="KW-0275">Fatty acid biosynthesis</keyword>
<keyword id="KW-0276">Fatty acid metabolism</keyword>
<keyword id="KW-0444">Lipid biosynthesis</keyword>
<keyword id="KW-0443">Lipid metabolism</keyword>
<keyword id="KW-0547">Nucleotide-binding</keyword>
<keyword id="KW-0808">Transferase</keyword>